<dbReference type="EC" id="4.2.1.59" evidence="1"/>
<dbReference type="EMBL" id="CP000703">
    <property type="protein sequence ID" value="ABQ49917.1"/>
    <property type="molecule type" value="Genomic_DNA"/>
</dbReference>
<dbReference type="RefSeq" id="WP_000447678.1">
    <property type="nucleotide sequence ID" value="NC_009487.1"/>
</dbReference>
<dbReference type="SMR" id="A5IUP4"/>
<dbReference type="KEGG" id="saj:SaurJH9_2135"/>
<dbReference type="HOGENOM" id="CLU_078912_3_0_9"/>
<dbReference type="GO" id="GO:0005737">
    <property type="term" value="C:cytoplasm"/>
    <property type="evidence" value="ECO:0007669"/>
    <property type="project" value="UniProtKB-SubCell"/>
</dbReference>
<dbReference type="GO" id="GO:0016020">
    <property type="term" value="C:membrane"/>
    <property type="evidence" value="ECO:0007669"/>
    <property type="project" value="GOC"/>
</dbReference>
<dbReference type="GO" id="GO:0019171">
    <property type="term" value="F:(3R)-hydroxyacyl-[acyl-carrier-protein] dehydratase activity"/>
    <property type="evidence" value="ECO:0007669"/>
    <property type="project" value="UniProtKB-EC"/>
</dbReference>
<dbReference type="GO" id="GO:0006633">
    <property type="term" value="P:fatty acid biosynthetic process"/>
    <property type="evidence" value="ECO:0007669"/>
    <property type="project" value="UniProtKB-UniRule"/>
</dbReference>
<dbReference type="GO" id="GO:0009245">
    <property type="term" value="P:lipid A biosynthetic process"/>
    <property type="evidence" value="ECO:0007669"/>
    <property type="project" value="UniProtKB-UniRule"/>
</dbReference>
<dbReference type="CDD" id="cd01288">
    <property type="entry name" value="FabZ"/>
    <property type="match status" value="1"/>
</dbReference>
<dbReference type="FunFam" id="3.10.129.10:FF:000001">
    <property type="entry name" value="3-hydroxyacyl-[acyl-carrier-protein] dehydratase FabZ"/>
    <property type="match status" value="1"/>
</dbReference>
<dbReference type="Gene3D" id="3.10.129.10">
    <property type="entry name" value="Hotdog Thioesterase"/>
    <property type="match status" value="1"/>
</dbReference>
<dbReference type="HAMAP" id="MF_00406">
    <property type="entry name" value="FabZ"/>
    <property type="match status" value="1"/>
</dbReference>
<dbReference type="InterPro" id="IPR013114">
    <property type="entry name" value="FabA_FabZ"/>
</dbReference>
<dbReference type="InterPro" id="IPR010084">
    <property type="entry name" value="FabZ"/>
</dbReference>
<dbReference type="InterPro" id="IPR029069">
    <property type="entry name" value="HotDog_dom_sf"/>
</dbReference>
<dbReference type="NCBIfam" id="TIGR01750">
    <property type="entry name" value="fabZ"/>
    <property type="match status" value="1"/>
</dbReference>
<dbReference type="NCBIfam" id="NF000582">
    <property type="entry name" value="PRK00006.1"/>
    <property type="match status" value="1"/>
</dbReference>
<dbReference type="PANTHER" id="PTHR30272">
    <property type="entry name" value="3-HYDROXYACYL-[ACYL-CARRIER-PROTEIN] DEHYDRATASE"/>
    <property type="match status" value="1"/>
</dbReference>
<dbReference type="PANTHER" id="PTHR30272:SF1">
    <property type="entry name" value="3-HYDROXYACYL-[ACYL-CARRIER-PROTEIN] DEHYDRATASE"/>
    <property type="match status" value="1"/>
</dbReference>
<dbReference type="Pfam" id="PF07977">
    <property type="entry name" value="FabA"/>
    <property type="match status" value="1"/>
</dbReference>
<dbReference type="SUPFAM" id="SSF54637">
    <property type="entry name" value="Thioesterase/thiol ester dehydrase-isomerase"/>
    <property type="match status" value="1"/>
</dbReference>
<sequence length="146" mass="16082">METIFDYNQIKQIIPHRQPFLLIDKVVEYEEGQRCVAIKQVSGNEPFFQGHFPEYAVMPGVLITEALAQTGAVAILNSEENKGKIALFAGIDKCRFKRQVVPGDTLTLEVEITKIKGPIGKGNAKATVDGQLACSCELTFAIQDVK</sequence>
<keyword id="KW-0963">Cytoplasm</keyword>
<keyword id="KW-0441">Lipid A biosynthesis</keyword>
<keyword id="KW-0444">Lipid biosynthesis</keyword>
<keyword id="KW-0443">Lipid metabolism</keyword>
<keyword id="KW-0456">Lyase</keyword>
<reference key="1">
    <citation type="submission" date="2007-05" db="EMBL/GenBank/DDBJ databases">
        <title>Complete sequence of chromosome of Staphylococcus aureus subsp. aureus JH9.</title>
        <authorList>
            <consortium name="US DOE Joint Genome Institute"/>
            <person name="Copeland A."/>
            <person name="Lucas S."/>
            <person name="Lapidus A."/>
            <person name="Barry K."/>
            <person name="Detter J.C."/>
            <person name="Glavina del Rio T."/>
            <person name="Hammon N."/>
            <person name="Israni S."/>
            <person name="Pitluck S."/>
            <person name="Chain P."/>
            <person name="Malfatti S."/>
            <person name="Shin M."/>
            <person name="Vergez L."/>
            <person name="Schmutz J."/>
            <person name="Larimer F."/>
            <person name="Land M."/>
            <person name="Hauser L."/>
            <person name="Kyrpides N."/>
            <person name="Kim E."/>
            <person name="Tomasz A."/>
            <person name="Richardson P."/>
        </authorList>
    </citation>
    <scope>NUCLEOTIDE SEQUENCE [LARGE SCALE GENOMIC DNA]</scope>
    <source>
        <strain>JH9</strain>
    </source>
</reference>
<protein>
    <recommendedName>
        <fullName evidence="1">3-hydroxyacyl-[acyl-carrier-protein] dehydratase FabZ</fullName>
        <ecNumber evidence="1">4.2.1.59</ecNumber>
    </recommendedName>
    <alternativeName>
        <fullName evidence="1">(3R)-hydroxymyristoyl-[acyl-carrier-protein] dehydratase</fullName>
        <shortName evidence="1">(3R)-hydroxymyristoyl-ACP dehydrase</shortName>
    </alternativeName>
    <alternativeName>
        <fullName evidence="1">Beta-hydroxyacyl-ACP dehydratase</fullName>
    </alternativeName>
</protein>
<evidence type="ECO:0000255" key="1">
    <source>
        <dbReference type="HAMAP-Rule" id="MF_00406"/>
    </source>
</evidence>
<accession>A5IUP4</accession>
<feature type="chain" id="PRO_1000080454" description="3-hydroxyacyl-[acyl-carrier-protein] dehydratase FabZ">
    <location>
        <begin position="1"/>
        <end position="146"/>
    </location>
</feature>
<feature type="active site" evidence="1">
    <location>
        <position position="51"/>
    </location>
</feature>
<comment type="function">
    <text evidence="1">Involved in unsaturated fatty acids biosynthesis. Catalyzes the dehydration of short chain beta-hydroxyacyl-ACPs and long chain saturated and unsaturated beta-hydroxyacyl-ACPs.</text>
</comment>
<comment type="catalytic activity">
    <reaction evidence="1">
        <text>a (3R)-hydroxyacyl-[ACP] = a (2E)-enoyl-[ACP] + H2O</text>
        <dbReference type="Rhea" id="RHEA:13097"/>
        <dbReference type="Rhea" id="RHEA-COMP:9925"/>
        <dbReference type="Rhea" id="RHEA-COMP:9945"/>
        <dbReference type="ChEBI" id="CHEBI:15377"/>
        <dbReference type="ChEBI" id="CHEBI:78784"/>
        <dbReference type="ChEBI" id="CHEBI:78827"/>
        <dbReference type="EC" id="4.2.1.59"/>
    </reaction>
</comment>
<comment type="subcellular location">
    <subcellularLocation>
        <location evidence="1">Cytoplasm</location>
    </subcellularLocation>
</comment>
<comment type="similarity">
    <text evidence="1">Belongs to the thioester dehydratase family. FabZ subfamily.</text>
</comment>
<organism>
    <name type="scientific">Staphylococcus aureus (strain JH9)</name>
    <dbReference type="NCBI Taxonomy" id="359786"/>
    <lineage>
        <taxon>Bacteria</taxon>
        <taxon>Bacillati</taxon>
        <taxon>Bacillota</taxon>
        <taxon>Bacilli</taxon>
        <taxon>Bacillales</taxon>
        <taxon>Staphylococcaceae</taxon>
        <taxon>Staphylococcus</taxon>
    </lineage>
</organism>
<gene>
    <name evidence="1" type="primary">fabZ</name>
    <name type="ordered locus">SaurJH9_2135</name>
</gene>
<proteinExistence type="inferred from homology"/>
<name>FABZ_STAA9</name>